<proteinExistence type="inferred from homology"/>
<evidence type="ECO:0000255" key="1">
    <source>
        <dbReference type="HAMAP-Rule" id="MF_00746"/>
    </source>
</evidence>
<keyword id="KW-0963">Cytoplasm</keyword>
<keyword id="KW-0479">Metal-binding</keyword>
<keyword id="KW-0862">Zinc</keyword>
<feature type="chain" id="PRO_1000046546" description="Protein SprT">
    <location>
        <begin position="1"/>
        <end position="170"/>
    </location>
</feature>
<feature type="domain" description="SprT-like" evidence="1">
    <location>
        <begin position="22"/>
        <end position="165"/>
    </location>
</feature>
<feature type="active site" evidence="1">
    <location>
        <position position="79"/>
    </location>
</feature>
<feature type="binding site" evidence="1">
    <location>
        <position position="78"/>
    </location>
    <ligand>
        <name>Zn(2+)</name>
        <dbReference type="ChEBI" id="CHEBI:29105"/>
    </ligand>
</feature>
<feature type="binding site" evidence="1">
    <location>
        <position position="82"/>
    </location>
    <ligand>
        <name>Zn(2+)</name>
        <dbReference type="ChEBI" id="CHEBI:29105"/>
    </ligand>
</feature>
<comment type="cofactor">
    <cofactor evidence="1">
        <name>Zn(2+)</name>
        <dbReference type="ChEBI" id="CHEBI:29105"/>
    </cofactor>
    <text evidence="1">Binds 1 zinc ion.</text>
</comment>
<comment type="subcellular location">
    <subcellularLocation>
        <location evidence="1">Cytoplasm</location>
    </subcellularLocation>
</comment>
<comment type="similarity">
    <text evidence="1">Belongs to the SprT family.</text>
</comment>
<dbReference type="EMBL" id="BX936398">
    <property type="protein sequence ID" value="CAH22442.1"/>
    <property type="molecule type" value="Genomic_DNA"/>
</dbReference>
<dbReference type="RefSeq" id="WP_011192970.1">
    <property type="nucleotide sequence ID" value="NC_006155.1"/>
</dbReference>
<dbReference type="GeneID" id="49784807"/>
<dbReference type="KEGG" id="ypo:BZ17_3406"/>
<dbReference type="KEGG" id="yps:YPTB3204"/>
<dbReference type="PATRIC" id="fig|273123.14.peg.3574"/>
<dbReference type="Proteomes" id="UP000001011">
    <property type="component" value="Chromosome"/>
</dbReference>
<dbReference type="GO" id="GO:0005737">
    <property type="term" value="C:cytoplasm"/>
    <property type="evidence" value="ECO:0007669"/>
    <property type="project" value="UniProtKB-SubCell"/>
</dbReference>
<dbReference type="GO" id="GO:0008270">
    <property type="term" value="F:zinc ion binding"/>
    <property type="evidence" value="ECO:0007669"/>
    <property type="project" value="UniProtKB-UniRule"/>
</dbReference>
<dbReference type="GO" id="GO:0006950">
    <property type="term" value="P:response to stress"/>
    <property type="evidence" value="ECO:0007669"/>
    <property type="project" value="UniProtKB-ARBA"/>
</dbReference>
<dbReference type="Gene3D" id="3.30.2010.10">
    <property type="entry name" value="Metalloproteases ('zincins'), catalytic domain"/>
    <property type="match status" value="1"/>
</dbReference>
<dbReference type="HAMAP" id="MF_00746">
    <property type="entry name" value="SprT"/>
    <property type="match status" value="1"/>
</dbReference>
<dbReference type="InterPro" id="IPR006640">
    <property type="entry name" value="SprT-like_domain"/>
</dbReference>
<dbReference type="InterPro" id="IPR035240">
    <property type="entry name" value="SprT_Zn_ribbon"/>
</dbReference>
<dbReference type="InterPro" id="IPR023483">
    <property type="entry name" value="Uncharacterised_SprT"/>
</dbReference>
<dbReference type="NCBIfam" id="NF003421">
    <property type="entry name" value="PRK04860.1"/>
    <property type="match status" value="1"/>
</dbReference>
<dbReference type="PANTHER" id="PTHR38773">
    <property type="entry name" value="PROTEIN SPRT"/>
    <property type="match status" value="1"/>
</dbReference>
<dbReference type="PANTHER" id="PTHR38773:SF1">
    <property type="entry name" value="PROTEIN SPRT"/>
    <property type="match status" value="1"/>
</dbReference>
<dbReference type="Pfam" id="PF10263">
    <property type="entry name" value="SprT-like"/>
    <property type="match status" value="1"/>
</dbReference>
<dbReference type="Pfam" id="PF17283">
    <property type="entry name" value="Zn_ribbon_SprT"/>
    <property type="match status" value="1"/>
</dbReference>
<dbReference type="SMART" id="SM00731">
    <property type="entry name" value="SprT"/>
    <property type="match status" value="1"/>
</dbReference>
<dbReference type="PROSITE" id="PS00142">
    <property type="entry name" value="ZINC_PROTEASE"/>
    <property type="match status" value="1"/>
</dbReference>
<gene>
    <name evidence="1" type="primary">sprT</name>
    <name type="ordered locus">YPTB3204</name>
</gene>
<reference key="1">
    <citation type="journal article" date="2004" name="Proc. Natl. Acad. Sci. U.S.A.">
        <title>Insights into the evolution of Yersinia pestis through whole-genome comparison with Yersinia pseudotuberculosis.</title>
        <authorList>
            <person name="Chain P.S.G."/>
            <person name="Carniel E."/>
            <person name="Larimer F.W."/>
            <person name="Lamerdin J."/>
            <person name="Stoutland P.O."/>
            <person name="Regala W.M."/>
            <person name="Georgescu A.M."/>
            <person name="Vergez L.M."/>
            <person name="Land M.L."/>
            <person name="Motin V.L."/>
            <person name="Brubaker R.R."/>
            <person name="Fowler J."/>
            <person name="Hinnebusch J."/>
            <person name="Marceau M."/>
            <person name="Medigue C."/>
            <person name="Simonet M."/>
            <person name="Chenal-Francisque V."/>
            <person name="Souza B."/>
            <person name="Dacheux D."/>
            <person name="Elliott J.M."/>
            <person name="Derbise A."/>
            <person name="Hauser L.J."/>
            <person name="Garcia E."/>
        </authorList>
    </citation>
    <scope>NUCLEOTIDE SEQUENCE [LARGE SCALE GENOMIC DNA]</scope>
    <source>
        <strain>IP32953</strain>
    </source>
</reference>
<protein>
    <recommendedName>
        <fullName evidence="1">Protein SprT</fullName>
    </recommendedName>
</protein>
<organism>
    <name type="scientific">Yersinia pseudotuberculosis serotype I (strain IP32953)</name>
    <dbReference type="NCBI Taxonomy" id="273123"/>
    <lineage>
        <taxon>Bacteria</taxon>
        <taxon>Pseudomonadati</taxon>
        <taxon>Pseudomonadota</taxon>
        <taxon>Gammaproteobacteria</taxon>
        <taxon>Enterobacterales</taxon>
        <taxon>Yersiniaceae</taxon>
        <taxon>Yersinia</taxon>
    </lineage>
</organism>
<name>SPRT_YERPS</name>
<sequence>MSTLRIPIALQQAVMQCLRHYLQLANQHLGTAYPEPKINYHQRGTNAGSAYLQSFEIRLNPVLLLENKQPFIDEVVPHELAHLLVYRQFDRVAPHGKEWRWMMEQVLKVPASRTHQFEVASVRSKTFNYQCKCQQHALTIRRHNKVLRGESEYRCRQCGEKLQFITINPD</sequence>
<accession>Q666P4</accession>